<sequence>MNLESLSSFMELSKNFRHKSVLEKRQEIKSFLELSYKDFFYNNANEDFLFNMIENYIGYLSFPIGIVKNLKINGKYYSLPIATEESSVVAALNFAAKILENADLRYSLGEVLGISQIYIKSEKDLSKIFVDLGDKIKTWIEPLLTNMNQRGGGFRRLSTRHIKELGIQKLNIYVDTCDAMGANLLNSIAERVAEFIFLEFGYECVLKVLSNDISEFTAKARFVLDFKHLLPGKEDSWNLAKKIELISSIGFYEEERAVTNNKGIMNGITGVCLATFNDTRALEASVHKFASKSGKYFPLSKFYTTDNALVGEIEIPLQVGTKGGVISFNEASILSFKIMNVNSKSEFIGILSCVGLASNFAALRALAFNGIQKGHMRLHVNKILHLLKTKYNISDFEKDKLLLEMERMNIYSFDFAFKILKKIRLENENKV</sequence>
<keyword id="KW-0520">NAD</keyword>
<keyword id="KW-0560">Oxidoreductase</keyword>
<keyword id="KW-1185">Reference proteome</keyword>
<feature type="chain" id="PRO_0000114466" description="Probable 3-hydroxy-3-methylglutaryl-coenzyme A reductase">
    <location>
        <begin position="1"/>
        <end position="431"/>
    </location>
</feature>
<feature type="active site" description="Charge relay system" evidence="1">
    <location>
        <position position="85"/>
    </location>
</feature>
<feature type="active site" description="Charge relay system" evidence="1">
    <location>
        <position position="278"/>
    </location>
</feature>
<feature type="active site" description="Proton donor" evidence="1">
    <location>
        <position position="375"/>
    </location>
</feature>
<accession>O51628</accession>
<reference key="1">
    <citation type="journal article" date="1997" name="Nature">
        <title>Genomic sequence of a Lyme disease spirochaete, Borrelia burgdorferi.</title>
        <authorList>
            <person name="Fraser C.M."/>
            <person name="Casjens S."/>
            <person name="Huang W.M."/>
            <person name="Sutton G.G."/>
            <person name="Clayton R.A."/>
            <person name="Lathigra R."/>
            <person name="White O."/>
            <person name="Ketchum K.A."/>
            <person name="Dodson R.J."/>
            <person name="Hickey E.K."/>
            <person name="Gwinn M.L."/>
            <person name="Dougherty B.A."/>
            <person name="Tomb J.-F."/>
            <person name="Fleischmann R.D."/>
            <person name="Richardson D.L."/>
            <person name="Peterson J.D."/>
            <person name="Kerlavage A.R."/>
            <person name="Quackenbush J."/>
            <person name="Salzberg S.L."/>
            <person name="Hanson M."/>
            <person name="van Vugt R."/>
            <person name="Palmer N."/>
            <person name="Adams M.D."/>
            <person name="Gocayne J.D."/>
            <person name="Weidman J.F."/>
            <person name="Utterback T.R."/>
            <person name="Watthey L."/>
            <person name="McDonald L.A."/>
            <person name="Artiach P."/>
            <person name="Bowman C."/>
            <person name="Garland S.A."/>
            <person name="Fujii C."/>
            <person name="Cotton M.D."/>
            <person name="Horst K."/>
            <person name="Roberts K.M."/>
            <person name="Hatch B."/>
            <person name="Smith H.O."/>
            <person name="Venter J.C."/>
        </authorList>
    </citation>
    <scope>NUCLEOTIDE SEQUENCE [LARGE SCALE GENOMIC DNA]</scope>
    <source>
        <strain>ATCC 35210 / DSM 4680 / CIP 102532 / B31</strain>
    </source>
</reference>
<proteinExistence type="inferred from homology"/>
<gene>
    <name type="ordered locus">BB_0685</name>
</gene>
<comment type="function">
    <text evidence="1">Converts HMG-CoA to mevalonate.</text>
</comment>
<comment type="catalytic activity">
    <reaction>
        <text>(R)-mevalonate + 2 NAD(+) + CoA = (3S)-3-hydroxy-3-methylglutaryl-CoA + 2 NADH + 2 H(+)</text>
        <dbReference type="Rhea" id="RHEA:14833"/>
        <dbReference type="ChEBI" id="CHEBI:15378"/>
        <dbReference type="ChEBI" id="CHEBI:36464"/>
        <dbReference type="ChEBI" id="CHEBI:43074"/>
        <dbReference type="ChEBI" id="CHEBI:57287"/>
        <dbReference type="ChEBI" id="CHEBI:57540"/>
        <dbReference type="ChEBI" id="CHEBI:57945"/>
        <dbReference type="EC" id="1.1.1.88"/>
    </reaction>
</comment>
<comment type="pathway">
    <text>Metabolic intermediate metabolism; (R)-mevalonate degradation; (S)-3-hydroxy-3-methylglutaryl-CoA from (R)-mevalonate: step 1/1.</text>
</comment>
<comment type="similarity">
    <text evidence="2">Belongs to the HMG-CoA reductase family.</text>
</comment>
<protein>
    <recommendedName>
        <fullName>Probable 3-hydroxy-3-methylglutaryl-coenzyme A reductase</fullName>
        <shortName>HMG-CoA reductase</shortName>
        <ecNumber>1.1.1.88</ecNumber>
    </recommendedName>
</protein>
<organism>
    <name type="scientific">Borreliella burgdorferi (strain ATCC 35210 / DSM 4680 / CIP 102532 / B31)</name>
    <name type="common">Borrelia burgdorferi</name>
    <dbReference type="NCBI Taxonomy" id="224326"/>
    <lineage>
        <taxon>Bacteria</taxon>
        <taxon>Pseudomonadati</taxon>
        <taxon>Spirochaetota</taxon>
        <taxon>Spirochaetia</taxon>
        <taxon>Spirochaetales</taxon>
        <taxon>Borreliaceae</taxon>
        <taxon>Borreliella</taxon>
    </lineage>
</organism>
<name>HMDH_BORBU</name>
<evidence type="ECO:0000250" key="1"/>
<evidence type="ECO:0000305" key="2"/>
<dbReference type="EC" id="1.1.1.88"/>
<dbReference type="EMBL" id="AE000783">
    <property type="protein sequence ID" value="AAC67032.1"/>
    <property type="molecule type" value="Genomic_DNA"/>
</dbReference>
<dbReference type="PIR" id="D70185">
    <property type="entry name" value="D70185"/>
</dbReference>
<dbReference type="RefSeq" id="NP_212819.1">
    <property type="nucleotide sequence ID" value="NC_001318.1"/>
</dbReference>
<dbReference type="SMR" id="O51628"/>
<dbReference type="STRING" id="224326.BB_0685"/>
<dbReference type="PaxDb" id="224326-BB_0685"/>
<dbReference type="EnsemblBacteria" id="AAC67032">
    <property type="protein sequence ID" value="AAC67032"/>
    <property type="gene ID" value="BB_0685"/>
</dbReference>
<dbReference type="KEGG" id="bbu:BB_0685"/>
<dbReference type="PATRIC" id="fig|224326.49.peg.1076"/>
<dbReference type="HOGENOM" id="CLU_033422_0_0_12"/>
<dbReference type="OrthoDB" id="9764892at2"/>
<dbReference type="UniPathway" id="UPA00257">
    <property type="reaction ID" value="UER00367"/>
</dbReference>
<dbReference type="Proteomes" id="UP000001807">
    <property type="component" value="Chromosome"/>
</dbReference>
<dbReference type="GO" id="GO:0140643">
    <property type="term" value="F:hydroxymethylglutaryl-CoA reductase (NADH) activity"/>
    <property type="evidence" value="ECO:0007669"/>
    <property type="project" value="UniProtKB-EC"/>
</dbReference>
<dbReference type="GO" id="GO:0004420">
    <property type="term" value="F:hydroxymethylglutaryl-CoA reductase (NADPH) activity"/>
    <property type="evidence" value="ECO:0007669"/>
    <property type="project" value="InterPro"/>
</dbReference>
<dbReference type="GO" id="GO:0015936">
    <property type="term" value="P:coenzyme A metabolic process"/>
    <property type="evidence" value="ECO:0007669"/>
    <property type="project" value="InterPro"/>
</dbReference>
<dbReference type="CDD" id="cd00644">
    <property type="entry name" value="HMG-CoA_reductase_classII"/>
    <property type="match status" value="1"/>
</dbReference>
<dbReference type="Gene3D" id="1.10.8.660">
    <property type="match status" value="1"/>
</dbReference>
<dbReference type="Gene3D" id="3.90.770.10">
    <property type="entry name" value="3-hydroxy-3-methylglutaryl-coenzyme A Reductase, Chain A, domain 2"/>
    <property type="match status" value="2"/>
</dbReference>
<dbReference type="Gene3D" id="3.30.70.420">
    <property type="entry name" value="Hydroxymethylglutaryl-CoA reductase, class I/II, NAD/NADP-binding domain"/>
    <property type="match status" value="1"/>
</dbReference>
<dbReference type="InterPro" id="IPR002202">
    <property type="entry name" value="HMG_CoA_Rdtase"/>
</dbReference>
<dbReference type="InterPro" id="IPR004553">
    <property type="entry name" value="HMG_CoA_Rdtase_bac-typ"/>
</dbReference>
<dbReference type="InterPro" id="IPR023074">
    <property type="entry name" value="HMG_CoA_Rdtase_cat_sf"/>
</dbReference>
<dbReference type="InterPro" id="IPR009023">
    <property type="entry name" value="HMG_CoA_Rdtase_NAD(P)-bd_sf"/>
</dbReference>
<dbReference type="InterPro" id="IPR009029">
    <property type="entry name" value="HMG_CoA_Rdtase_sub-bd_dom_sf"/>
</dbReference>
<dbReference type="NCBIfam" id="TIGR00532">
    <property type="entry name" value="HMG_CoA_R_NAD"/>
    <property type="match status" value="1"/>
</dbReference>
<dbReference type="PANTHER" id="PTHR10572">
    <property type="entry name" value="3-HYDROXY-3-METHYLGLUTARYL-COENZYME A REDUCTASE"/>
    <property type="match status" value="1"/>
</dbReference>
<dbReference type="PANTHER" id="PTHR10572:SF24">
    <property type="entry name" value="3-HYDROXY-3-METHYLGLUTARYL-COENZYME A REDUCTASE"/>
    <property type="match status" value="1"/>
</dbReference>
<dbReference type="Pfam" id="PF00368">
    <property type="entry name" value="HMG-CoA_red"/>
    <property type="match status" value="1"/>
</dbReference>
<dbReference type="PRINTS" id="PR00071">
    <property type="entry name" value="HMGCOARDTASE"/>
</dbReference>
<dbReference type="SUPFAM" id="SSF55035">
    <property type="entry name" value="NAD-binding domain of HMG-CoA reductase"/>
    <property type="match status" value="1"/>
</dbReference>
<dbReference type="SUPFAM" id="SSF56542">
    <property type="entry name" value="Substrate-binding domain of HMG-CoA reductase"/>
    <property type="match status" value="1"/>
</dbReference>
<dbReference type="PROSITE" id="PS50065">
    <property type="entry name" value="HMG_COA_REDUCTASE_4"/>
    <property type="match status" value="1"/>
</dbReference>